<organism>
    <name type="scientific">Oryza sativa subsp. indica</name>
    <name type="common">Rice</name>
    <dbReference type="NCBI Taxonomy" id="39946"/>
    <lineage>
        <taxon>Eukaryota</taxon>
        <taxon>Viridiplantae</taxon>
        <taxon>Streptophyta</taxon>
        <taxon>Embryophyta</taxon>
        <taxon>Tracheophyta</taxon>
        <taxon>Spermatophyta</taxon>
        <taxon>Magnoliopsida</taxon>
        <taxon>Liliopsida</taxon>
        <taxon>Poales</taxon>
        <taxon>Poaceae</taxon>
        <taxon>BOP clade</taxon>
        <taxon>Oryzoideae</taxon>
        <taxon>Oryzeae</taxon>
        <taxon>Oryzinae</taxon>
        <taxon>Oryza</taxon>
        <taxon>Oryza sativa</taxon>
    </lineage>
</organism>
<sequence>MAPKAEKKPAAKKPAEEEPAAEKAPAAGKKPKAEKRLPAGKGEKGGAGEGKKAGRKKGKKSVETYKIYIFKVLKQVHPDIGISSKAMSIMNSFINDIFEKLAAEAAKLARYNKKPTITSREIQTSVRLVLPGELAKHAVSEGTKAVTKFTSA</sequence>
<comment type="function">
    <text>Core component of nucleosome. Nucleosomes wrap and compact DNA into chromatin, limiting DNA accessibility to the cellular machineries which require DNA as a template. Histones thereby play a central role in transcription regulation, DNA repair, DNA replication and chromosomal stability. DNA accessibility is regulated via a complex set of post-translational modifications of histones, also called histone code, and nucleosome remodeling.</text>
</comment>
<comment type="subunit">
    <text>The nucleosome is a histone octamer containing two molecules each of H2A, H2B, H3 and H4 assembled in one H3-H4 heterotetramer and two H2A-H2B heterodimers. The octamer wraps approximately 147 bp of DNA.</text>
</comment>
<comment type="subcellular location">
    <subcellularLocation>
        <location evidence="1">Nucleus</location>
    </subcellularLocation>
    <subcellularLocation>
        <location evidence="1">Chromosome</location>
    </subcellularLocation>
</comment>
<comment type="PTM">
    <text evidence="1">Can be acetylated to form H2BK6ac and H2BK33ac.</text>
</comment>
<comment type="PTM">
    <text evidence="1">Monoubiquitinated by BRE1 to form H2BK143ub1 and deubiquitinated by UBP26. Required for heterochromatic histone H3 di- and trimethylation at H3K4me. May give a specific tag for epigenetic transcriptional activation (By similarity).</text>
</comment>
<comment type="similarity">
    <text evidence="3">Belongs to the histone H2B family.</text>
</comment>
<comment type="caution">
    <text evidence="3">To ensure consistency between histone entries, we follow the 'Brno' nomenclature for histone modifications, with positions referring to those used in the literature for the 'closest' model organism. Due to slight variations in histone sequences between organisms and to the presence of initiator methionine in UniProtKB/Swiss-Prot sequences, the actual positions of modified amino acids in the sequence generally differ. In this entry the following conventions are used: H2BK6ac = acetylated Lys-7; H2BK33ac = acetylated Lys-35; H2BK143ub1 = monoubiquitinated Lys-148.</text>
</comment>
<evidence type="ECO:0000250" key="1"/>
<evidence type="ECO:0000256" key="2">
    <source>
        <dbReference type="SAM" id="MobiDB-lite"/>
    </source>
</evidence>
<evidence type="ECO:0000305" key="3"/>
<accession>A2Y7R3</accession>
<gene>
    <name type="primary">H2B.9</name>
    <name type="ORF">OsI_020356</name>
</gene>
<name>H2B9_ORYSI</name>
<proteinExistence type="inferred from homology"/>
<dbReference type="EMBL" id="CM000130">
    <property type="protein sequence ID" value="EAY99123.1"/>
    <property type="molecule type" value="Genomic_DNA"/>
</dbReference>
<dbReference type="SMR" id="A2Y7R3"/>
<dbReference type="STRING" id="39946.A2Y7R3"/>
<dbReference type="EnsemblPlants" id="BGIOSGA020410-TA">
    <property type="protein sequence ID" value="BGIOSGA020410-PA"/>
    <property type="gene ID" value="BGIOSGA020410"/>
</dbReference>
<dbReference type="EnsemblPlants" id="OsGoSa_05g0027560.01">
    <property type="protein sequence ID" value="OsGoSa_05g0027560.01"/>
    <property type="gene ID" value="OsGoSa_05g0027560"/>
</dbReference>
<dbReference type="EnsemblPlants" id="OsIR64_05g0027300.01">
    <property type="protein sequence ID" value="OsIR64_05g0027300.01"/>
    <property type="gene ID" value="OsIR64_05g0027300"/>
</dbReference>
<dbReference type="EnsemblPlants" id="OsKYG_05g0027330.01">
    <property type="protein sequence ID" value="OsKYG_05g0027330.01"/>
    <property type="gene ID" value="OsKYG_05g0027330"/>
</dbReference>
<dbReference type="EnsemblPlants" id="OsLima_05g0027450.01">
    <property type="protein sequence ID" value="OsLima_05g0027450.01"/>
    <property type="gene ID" value="OsLima_05g0027450"/>
</dbReference>
<dbReference type="EnsemblPlants" id="OsLiXu_05g0027570.01">
    <property type="protein sequence ID" value="OsLiXu_05g0027570.01"/>
    <property type="gene ID" value="OsLiXu_05g0027570"/>
</dbReference>
<dbReference type="EnsemblPlants" id="OsMH63_05G027480_01">
    <property type="protein sequence ID" value="OsMH63_05G027480_01"/>
    <property type="gene ID" value="OsMH63_05G027480"/>
</dbReference>
<dbReference type="EnsemblPlants" id="OsPr106_05g0027610.02">
    <property type="protein sequence ID" value="OsPr106_05g0027610.02"/>
    <property type="gene ID" value="OsPr106_05g0027610"/>
</dbReference>
<dbReference type="EnsemblPlants" id="OsZS97_05G027720_01">
    <property type="protein sequence ID" value="OsZS97_05G027720_01"/>
    <property type="gene ID" value="OsZS97_05G027720"/>
</dbReference>
<dbReference type="Gramene" id="BGIOSGA020410-TA">
    <property type="protein sequence ID" value="BGIOSGA020410-PA"/>
    <property type="gene ID" value="BGIOSGA020410"/>
</dbReference>
<dbReference type="Gramene" id="OsGoSa_05g0027560.01">
    <property type="protein sequence ID" value="OsGoSa_05g0027560.01"/>
    <property type="gene ID" value="OsGoSa_05g0027560"/>
</dbReference>
<dbReference type="Gramene" id="OsIR64_05g0027300.01">
    <property type="protein sequence ID" value="OsIR64_05g0027300.01"/>
    <property type="gene ID" value="OsIR64_05g0027300"/>
</dbReference>
<dbReference type="Gramene" id="OsKYG_05g0027330.01">
    <property type="protein sequence ID" value="OsKYG_05g0027330.01"/>
    <property type="gene ID" value="OsKYG_05g0027330"/>
</dbReference>
<dbReference type="Gramene" id="OsLima_05g0027450.01">
    <property type="protein sequence ID" value="OsLima_05g0027450.01"/>
    <property type="gene ID" value="OsLima_05g0027450"/>
</dbReference>
<dbReference type="Gramene" id="OsLiXu_05g0027570.01">
    <property type="protein sequence ID" value="OsLiXu_05g0027570.01"/>
    <property type="gene ID" value="OsLiXu_05g0027570"/>
</dbReference>
<dbReference type="Gramene" id="OsMH63_05G027480_01">
    <property type="protein sequence ID" value="OsMH63_05G027480_01"/>
    <property type="gene ID" value="OsMH63_05G027480"/>
</dbReference>
<dbReference type="Gramene" id="OsPr106_05g0027610.02">
    <property type="protein sequence ID" value="OsPr106_05g0027610.02"/>
    <property type="gene ID" value="OsPr106_05g0027610"/>
</dbReference>
<dbReference type="Gramene" id="OsZS97_05G027720_01">
    <property type="protein sequence ID" value="OsZS97_05G027720_01"/>
    <property type="gene ID" value="OsZS97_05G027720"/>
</dbReference>
<dbReference type="HOGENOM" id="CLU_075666_1_0_1"/>
<dbReference type="OMA" id="TENMTQH"/>
<dbReference type="OrthoDB" id="10254238at2759"/>
<dbReference type="Proteomes" id="UP000007015">
    <property type="component" value="Chromosome 5"/>
</dbReference>
<dbReference type="GO" id="GO:0000786">
    <property type="term" value="C:nucleosome"/>
    <property type="evidence" value="ECO:0007669"/>
    <property type="project" value="UniProtKB-KW"/>
</dbReference>
<dbReference type="GO" id="GO:0005634">
    <property type="term" value="C:nucleus"/>
    <property type="evidence" value="ECO:0007669"/>
    <property type="project" value="UniProtKB-SubCell"/>
</dbReference>
<dbReference type="GO" id="GO:0003677">
    <property type="term" value="F:DNA binding"/>
    <property type="evidence" value="ECO:0007669"/>
    <property type="project" value="UniProtKB-KW"/>
</dbReference>
<dbReference type="GO" id="GO:0046982">
    <property type="term" value="F:protein heterodimerization activity"/>
    <property type="evidence" value="ECO:0007669"/>
    <property type="project" value="InterPro"/>
</dbReference>
<dbReference type="GO" id="GO:0030527">
    <property type="term" value="F:structural constituent of chromatin"/>
    <property type="evidence" value="ECO:0007669"/>
    <property type="project" value="InterPro"/>
</dbReference>
<dbReference type="CDD" id="cd22910">
    <property type="entry name" value="HFD_H2B"/>
    <property type="match status" value="1"/>
</dbReference>
<dbReference type="FunFam" id="1.10.20.10:FF:000014">
    <property type="entry name" value="Histone H2B"/>
    <property type="match status" value="1"/>
</dbReference>
<dbReference type="Gene3D" id="1.10.20.10">
    <property type="entry name" value="Histone, subunit A"/>
    <property type="match status" value="1"/>
</dbReference>
<dbReference type="InterPro" id="IPR009072">
    <property type="entry name" value="Histone-fold"/>
</dbReference>
<dbReference type="InterPro" id="IPR007125">
    <property type="entry name" value="Histone_H2A/H2B/H3"/>
</dbReference>
<dbReference type="InterPro" id="IPR000558">
    <property type="entry name" value="Histone_H2B"/>
</dbReference>
<dbReference type="InterPro" id="IPR055333">
    <property type="entry name" value="HISTONE_H2B_site"/>
</dbReference>
<dbReference type="PANTHER" id="PTHR23428">
    <property type="entry name" value="HISTONE H2B"/>
    <property type="match status" value="1"/>
</dbReference>
<dbReference type="Pfam" id="PF00125">
    <property type="entry name" value="Histone"/>
    <property type="match status" value="1"/>
</dbReference>
<dbReference type="PRINTS" id="PR00621">
    <property type="entry name" value="HISTONEH2B"/>
</dbReference>
<dbReference type="SMART" id="SM00427">
    <property type="entry name" value="H2B"/>
    <property type="match status" value="1"/>
</dbReference>
<dbReference type="SUPFAM" id="SSF47113">
    <property type="entry name" value="Histone-fold"/>
    <property type="match status" value="1"/>
</dbReference>
<dbReference type="PROSITE" id="PS00357">
    <property type="entry name" value="HISTONE_H2B"/>
    <property type="match status" value="1"/>
</dbReference>
<keyword id="KW-0007">Acetylation</keyword>
<keyword id="KW-0158">Chromosome</keyword>
<keyword id="KW-0238">DNA-binding</keyword>
<keyword id="KW-1017">Isopeptide bond</keyword>
<keyword id="KW-0544">Nucleosome core</keyword>
<keyword id="KW-0539">Nucleus</keyword>
<keyword id="KW-1185">Reference proteome</keyword>
<keyword id="KW-0832">Ubl conjugation</keyword>
<reference key="1">
    <citation type="journal article" date="2005" name="PLoS Biol.">
        <title>The genomes of Oryza sativa: a history of duplications.</title>
        <authorList>
            <person name="Yu J."/>
            <person name="Wang J."/>
            <person name="Lin W."/>
            <person name="Li S."/>
            <person name="Li H."/>
            <person name="Zhou J."/>
            <person name="Ni P."/>
            <person name="Dong W."/>
            <person name="Hu S."/>
            <person name="Zeng C."/>
            <person name="Zhang J."/>
            <person name="Zhang Y."/>
            <person name="Li R."/>
            <person name="Xu Z."/>
            <person name="Li S."/>
            <person name="Li X."/>
            <person name="Zheng H."/>
            <person name="Cong L."/>
            <person name="Lin L."/>
            <person name="Yin J."/>
            <person name="Geng J."/>
            <person name="Li G."/>
            <person name="Shi J."/>
            <person name="Liu J."/>
            <person name="Lv H."/>
            <person name="Li J."/>
            <person name="Wang J."/>
            <person name="Deng Y."/>
            <person name="Ran L."/>
            <person name="Shi X."/>
            <person name="Wang X."/>
            <person name="Wu Q."/>
            <person name="Li C."/>
            <person name="Ren X."/>
            <person name="Wang J."/>
            <person name="Wang X."/>
            <person name="Li D."/>
            <person name="Liu D."/>
            <person name="Zhang X."/>
            <person name="Ji Z."/>
            <person name="Zhao W."/>
            <person name="Sun Y."/>
            <person name="Zhang Z."/>
            <person name="Bao J."/>
            <person name="Han Y."/>
            <person name="Dong L."/>
            <person name="Ji J."/>
            <person name="Chen P."/>
            <person name="Wu S."/>
            <person name="Liu J."/>
            <person name="Xiao Y."/>
            <person name="Bu D."/>
            <person name="Tan J."/>
            <person name="Yang L."/>
            <person name="Ye C."/>
            <person name="Zhang J."/>
            <person name="Xu J."/>
            <person name="Zhou Y."/>
            <person name="Yu Y."/>
            <person name="Zhang B."/>
            <person name="Zhuang S."/>
            <person name="Wei H."/>
            <person name="Liu B."/>
            <person name="Lei M."/>
            <person name="Yu H."/>
            <person name="Li Y."/>
            <person name="Xu H."/>
            <person name="Wei S."/>
            <person name="He X."/>
            <person name="Fang L."/>
            <person name="Zhang Z."/>
            <person name="Zhang Y."/>
            <person name="Huang X."/>
            <person name="Su Z."/>
            <person name="Tong W."/>
            <person name="Li J."/>
            <person name="Tong Z."/>
            <person name="Li S."/>
            <person name="Ye J."/>
            <person name="Wang L."/>
            <person name="Fang L."/>
            <person name="Lei T."/>
            <person name="Chen C.-S."/>
            <person name="Chen H.-C."/>
            <person name="Xu Z."/>
            <person name="Li H."/>
            <person name="Huang H."/>
            <person name="Zhang F."/>
            <person name="Xu H."/>
            <person name="Li N."/>
            <person name="Zhao C."/>
            <person name="Li S."/>
            <person name="Dong L."/>
            <person name="Huang Y."/>
            <person name="Li L."/>
            <person name="Xi Y."/>
            <person name="Qi Q."/>
            <person name="Li W."/>
            <person name="Zhang B."/>
            <person name="Hu W."/>
            <person name="Zhang Y."/>
            <person name="Tian X."/>
            <person name="Jiao Y."/>
            <person name="Liang X."/>
            <person name="Jin J."/>
            <person name="Gao L."/>
            <person name="Zheng W."/>
            <person name="Hao B."/>
            <person name="Liu S.-M."/>
            <person name="Wang W."/>
            <person name="Yuan L."/>
            <person name="Cao M."/>
            <person name="McDermott J."/>
            <person name="Samudrala R."/>
            <person name="Wang J."/>
            <person name="Wong G.K.-S."/>
            <person name="Yang H."/>
        </authorList>
    </citation>
    <scope>NUCLEOTIDE SEQUENCE [LARGE SCALE GENOMIC DNA]</scope>
    <source>
        <strain>cv. 93-11</strain>
    </source>
</reference>
<protein>
    <recommendedName>
        <fullName>Histone H2B.9</fullName>
    </recommendedName>
</protein>
<feature type="initiator methionine" description="Removed" evidence="1">
    <location>
        <position position="1"/>
    </location>
</feature>
<feature type="chain" id="PRO_0000294192" description="Histone H2B.9">
    <location>
        <begin position="2"/>
        <end position="152"/>
    </location>
</feature>
<feature type="region of interest" description="Disordered" evidence="2">
    <location>
        <begin position="1"/>
        <end position="59"/>
    </location>
</feature>
<feature type="compositionally biased region" description="Basic and acidic residues" evidence="2">
    <location>
        <begin position="1"/>
        <end position="16"/>
    </location>
</feature>
<feature type="compositionally biased region" description="Basic and acidic residues" evidence="2">
    <location>
        <begin position="34"/>
        <end position="52"/>
    </location>
</feature>
<feature type="modified residue" description="N6-acetyllysine" evidence="1">
    <location>
        <position position="7"/>
    </location>
</feature>
<feature type="modified residue" description="N6-acetyllysine" evidence="1">
    <location>
        <position position="35"/>
    </location>
</feature>
<feature type="cross-link" description="Glycyl lysine isopeptide (Lys-Gly) (interchain with G-Cter in ubiquitin)" evidence="1">
    <location>
        <position position="148"/>
    </location>
</feature>